<accession>Q9RI72</accession>
<comment type="catalytic activity">
    <reaction>
        <text>Endohydrolysis of (1-&gt;4)-beta-D-xylosidic linkages in xylans.</text>
        <dbReference type="EC" id="3.2.1.8"/>
    </reaction>
</comment>
<comment type="pathway">
    <text>Glycan degradation; xylan degradation.</text>
</comment>
<comment type="subcellular location">
    <subcellularLocation>
        <location evidence="1">Secreted</location>
    </subcellularLocation>
</comment>
<comment type="PTM">
    <text>Predicted to be exported by the Tat system. The position of the signal peptide cleavage has not been experimentally proven.</text>
</comment>
<comment type="similarity">
    <text evidence="7">Belongs to the glycosyl hydrolase 11 (cellulase G) family.</text>
</comment>
<reference key="1">
    <citation type="journal article" date="2002" name="Nature">
        <title>Complete genome sequence of the model actinomycete Streptomyces coelicolor A3(2).</title>
        <authorList>
            <person name="Bentley S.D."/>
            <person name="Chater K.F."/>
            <person name="Cerdeno-Tarraga A.-M."/>
            <person name="Challis G.L."/>
            <person name="Thomson N.R."/>
            <person name="James K.D."/>
            <person name="Harris D.E."/>
            <person name="Quail M.A."/>
            <person name="Kieser H."/>
            <person name="Harper D."/>
            <person name="Bateman A."/>
            <person name="Brown S."/>
            <person name="Chandra G."/>
            <person name="Chen C.W."/>
            <person name="Collins M."/>
            <person name="Cronin A."/>
            <person name="Fraser A."/>
            <person name="Goble A."/>
            <person name="Hidalgo J."/>
            <person name="Hornsby T."/>
            <person name="Howarth S."/>
            <person name="Huang C.-H."/>
            <person name="Kieser T."/>
            <person name="Larke L."/>
            <person name="Murphy L.D."/>
            <person name="Oliver K."/>
            <person name="O'Neil S."/>
            <person name="Rabbinowitsch E."/>
            <person name="Rajandream M.A."/>
            <person name="Rutherford K.M."/>
            <person name="Rutter S."/>
            <person name="Seeger K."/>
            <person name="Saunders D."/>
            <person name="Sharp S."/>
            <person name="Squares R."/>
            <person name="Squares S."/>
            <person name="Taylor K."/>
            <person name="Warren T."/>
            <person name="Wietzorrek A."/>
            <person name="Woodward J.R."/>
            <person name="Barrell B.G."/>
            <person name="Parkhill J."/>
            <person name="Hopwood D.A."/>
        </authorList>
    </citation>
    <scope>NUCLEOTIDE SEQUENCE [LARGE SCALE GENOMIC DNA]</scope>
    <source>
        <strain>ATCC BAA-471 / A3(2) / M145</strain>
    </source>
</reference>
<organism>
    <name type="scientific">Streptomyces coelicolor (strain ATCC BAA-471 / A3(2) / M145)</name>
    <dbReference type="NCBI Taxonomy" id="100226"/>
    <lineage>
        <taxon>Bacteria</taxon>
        <taxon>Bacillati</taxon>
        <taxon>Actinomycetota</taxon>
        <taxon>Actinomycetes</taxon>
        <taxon>Kitasatosporales</taxon>
        <taxon>Streptomycetaceae</taxon>
        <taxon>Streptomyces</taxon>
        <taxon>Streptomyces albidoflavus group</taxon>
    </lineage>
</organism>
<keyword id="KW-0119">Carbohydrate metabolism</keyword>
<keyword id="KW-0326">Glycosidase</keyword>
<keyword id="KW-0378">Hydrolase</keyword>
<keyword id="KW-0624">Polysaccharide degradation</keyword>
<keyword id="KW-1185">Reference proteome</keyword>
<keyword id="KW-0964">Secreted</keyword>
<keyword id="KW-0732">Signal</keyword>
<keyword id="KW-0858">Xylan degradation</keyword>
<sequence>MQQDGTQQDRIKQSPAPLNGMSRRGFLGGAGTLALATASGLLLPGTAHAATTITTNQTGTDGMYYSFWTDGGGSVSMTLNGGGSYSTQWTNCGNFVAGKGWSTGGRRTVRYNGYFNPSGNGYGCLYGWTSNPLVEYYIVDNWGSYRPTGTYKGTVSSDGGTYDIYQTTRYNAPSVEGTKTFQQYWSVRQSKVTSGSGTITTGNHFDAWARAGMNMGQFRYYMIMATEGYQSSGSSNITVSG</sequence>
<gene>
    <name type="primary">xlnC</name>
    <name type="ordered locus">SCO0105</name>
    <name type="ORF">SCJ11.34c</name>
</gene>
<dbReference type="EC" id="3.2.1.8"/>
<dbReference type="EMBL" id="AL939104">
    <property type="protein sequence ID" value="CAB52919.1"/>
    <property type="molecule type" value="Genomic_DNA"/>
</dbReference>
<dbReference type="PIR" id="T37005">
    <property type="entry name" value="T37005"/>
</dbReference>
<dbReference type="RefSeq" id="NP_624448.1">
    <property type="nucleotide sequence ID" value="NC_003888.3"/>
</dbReference>
<dbReference type="RefSeq" id="WP_003978772.1">
    <property type="nucleotide sequence ID" value="NZ_VNID01000014.1"/>
</dbReference>
<dbReference type="SMR" id="Q9RI72"/>
<dbReference type="STRING" id="100226.gene:17757690"/>
<dbReference type="CAZy" id="GH11">
    <property type="family name" value="Glycoside Hydrolase Family 11"/>
</dbReference>
<dbReference type="PaxDb" id="100226-SCO0105"/>
<dbReference type="KEGG" id="sco:SCO0105"/>
<dbReference type="PATRIC" id="fig|100226.15.peg.87"/>
<dbReference type="eggNOG" id="COG0726">
    <property type="taxonomic scope" value="Bacteria"/>
</dbReference>
<dbReference type="HOGENOM" id="CLU_052631_3_2_11"/>
<dbReference type="InParanoid" id="Q9RI72"/>
<dbReference type="OrthoDB" id="9763050at2"/>
<dbReference type="PhylomeDB" id="Q9RI72"/>
<dbReference type="UniPathway" id="UPA00114"/>
<dbReference type="Proteomes" id="UP000001973">
    <property type="component" value="Chromosome"/>
</dbReference>
<dbReference type="GO" id="GO:0005576">
    <property type="term" value="C:extracellular region"/>
    <property type="evidence" value="ECO:0007669"/>
    <property type="project" value="UniProtKB-SubCell"/>
</dbReference>
<dbReference type="GO" id="GO:0031176">
    <property type="term" value="F:endo-1,4-beta-xylanase activity"/>
    <property type="evidence" value="ECO:0007669"/>
    <property type="project" value="UniProtKB-EC"/>
</dbReference>
<dbReference type="GO" id="GO:0045493">
    <property type="term" value="P:xylan catabolic process"/>
    <property type="evidence" value="ECO:0000318"/>
    <property type="project" value="GO_Central"/>
</dbReference>
<dbReference type="FunFam" id="2.60.120.180:FF:000001">
    <property type="entry name" value="Endo-1,4-beta-xylanase"/>
    <property type="match status" value="1"/>
</dbReference>
<dbReference type="Gene3D" id="2.60.120.180">
    <property type="match status" value="1"/>
</dbReference>
<dbReference type="InterPro" id="IPR013320">
    <property type="entry name" value="ConA-like_dom_sf"/>
</dbReference>
<dbReference type="InterPro" id="IPR013319">
    <property type="entry name" value="GH11/12"/>
</dbReference>
<dbReference type="InterPro" id="IPR018208">
    <property type="entry name" value="GH11_AS_1"/>
</dbReference>
<dbReference type="InterPro" id="IPR033119">
    <property type="entry name" value="GH11_AS_2"/>
</dbReference>
<dbReference type="InterPro" id="IPR033123">
    <property type="entry name" value="GH11_dom"/>
</dbReference>
<dbReference type="InterPro" id="IPR001137">
    <property type="entry name" value="Glyco_hydro_11"/>
</dbReference>
<dbReference type="InterPro" id="IPR006311">
    <property type="entry name" value="TAT_signal"/>
</dbReference>
<dbReference type="InterPro" id="IPR019546">
    <property type="entry name" value="TAT_signal_bac_arc"/>
</dbReference>
<dbReference type="NCBIfam" id="TIGR01409">
    <property type="entry name" value="TAT_signal_seq"/>
    <property type="match status" value="1"/>
</dbReference>
<dbReference type="PANTHER" id="PTHR46828">
    <property type="entry name" value="ENDO-1,4-BETA-XYLANASE A-RELATED"/>
    <property type="match status" value="1"/>
</dbReference>
<dbReference type="PANTHER" id="PTHR46828:SF2">
    <property type="entry name" value="ENDO-1,4-BETA-XYLANASE A-RELATED"/>
    <property type="match status" value="1"/>
</dbReference>
<dbReference type="Pfam" id="PF00457">
    <property type="entry name" value="Glyco_hydro_11"/>
    <property type="match status" value="1"/>
</dbReference>
<dbReference type="PRINTS" id="PR00911">
    <property type="entry name" value="GLHYDRLASE11"/>
</dbReference>
<dbReference type="SUPFAM" id="SSF49899">
    <property type="entry name" value="Concanavalin A-like lectins/glucanases"/>
    <property type="match status" value="1"/>
</dbReference>
<dbReference type="PROSITE" id="PS00776">
    <property type="entry name" value="GH11_1"/>
    <property type="match status" value="1"/>
</dbReference>
<dbReference type="PROSITE" id="PS00777">
    <property type="entry name" value="GH11_2"/>
    <property type="match status" value="1"/>
</dbReference>
<dbReference type="PROSITE" id="PS51761">
    <property type="entry name" value="GH11_3"/>
    <property type="match status" value="1"/>
</dbReference>
<dbReference type="PROSITE" id="PS51318">
    <property type="entry name" value="TAT"/>
    <property type="match status" value="1"/>
</dbReference>
<feature type="signal peptide" description="Tat-type signal" evidence="2">
    <location>
        <begin position="1"/>
        <end position="49"/>
    </location>
</feature>
<feature type="chain" id="PRO_0000295647" description="Endo-1,4-beta-xylanase C">
    <location>
        <begin position="50"/>
        <end position="241"/>
    </location>
</feature>
<feature type="domain" description="GH11" evidence="3">
    <location>
        <begin position="51"/>
        <end position="240"/>
    </location>
</feature>
<feature type="region of interest" description="Disordered" evidence="6">
    <location>
        <begin position="1"/>
        <end position="22"/>
    </location>
</feature>
<feature type="active site" description="Nucleophile" evidence="4">
    <location>
        <position position="135"/>
    </location>
</feature>
<feature type="active site" description="Proton donor" evidence="5">
    <location>
        <position position="227"/>
    </location>
</feature>
<protein>
    <recommendedName>
        <fullName>Endo-1,4-beta-xylanase C</fullName>
        <shortName>Xylanase C</shortName>
        <ecNumber>3.2.1.8</ecNumber>
    </recommendedName>
    <alternativeName>
        <fullName>1,4-beta-D-xylan xylanohydrolase C</fullName>
    </alternativeName>
</protein>
<proteinExistence type="inferred from homology"/>
<name>XYNC_STRCO</name>
<evidence type="ECO:0000250" key="1"/>
<evidence type="ECO:0000255" key="2">
    <source>
        <dbReference type="PROSITE-ProRule" id="PRU00648"/>
    </source>
</evidence>
<evidence type="ECO:0000255" key="3">
    <source>
        <dbReference type="PROSITE-ProRule" id="PRU01097"/>
    </source>
</evidence>
<evidence type="ECO:0000255" key="4">
    <source>
        <dbReference type="PROSITE-ProRule" id="PRU10062"/>
    </source>
</evidence>
<evidence type="ECO:0000255" key="5">
    <source>
        <dbReference type="PROSITE-ProRule" id="PRU10063"/>
    </source>
</evidence>
<evidence type="ECO:0000256" key="6">
    <source>
        <dbReference type="SAM" id="MobiDB-lite"/>
    </source>
</evidence>
<evidence type="ECO:0000305" key="7"/>